<evidence type="ECO:0000250" key="1">
    <source>
        <dbReference type="UniProtKB" id="G2QJR6"/>
    </source>
</evidence>
<evidence type="ECO:0000255" key="2"/>
<evidence type="ECO:0000255" key="3">
    <source>
        <dbReference type="PROSITE-ProRule" id="PRU00597"/>
    </source>
</evidence>
<evidence type="ECO:0000269" key="4">
    <source>
    </source>
</evidence>
<evidence type="ECO:0000303" key="5">
    <source>
    </source>
</evidence>
<evidence type="ECO:0000305" key="6"/>
<evidence type="ECO:0000305" key="7">
    <source>
    </source>
</evidence>
<dbReference type="EC" id="3.1.1.117" evidence="4"/>
<dbReference type="EMBL" id="CU633446">
    <property type="protein sequence ID" value="CAP60908.1"/>
    <property type="molecule type" value="Genomic_DNA"/>
</dbReference>
<dbReference type="EMBL" id="FO904937">
    <property type="protein sequence ID" value="CDP24923.1"/>
    <property type="molecule type" value="Genomic_DNA"/>
</dbReference>
<dbReference type="RefSeq" id="XP_001903136.1">
    <property type="nucleotide sequence ID" value="XM_001903101.1"/>
</dbReference>
<dbReference type="SMR" id="B2ABS0"/>
<dbReference type="CAZy" id="CBM1">
    <property type="family name" value="Carbohydrate-Binding Module Family 1"/>
</dbReference>
<dbReference type="ESTHER" id="podan-b2abs0">
    <property type="family name" value="Glucuronoyl_esterase"/>
</dbReference>
<dbReference type="GeneID" id="6187208"/>
<dbReference type="KEGG" id="pan:PODANSg148"/>
<dbReference type="VEuPathDB" id="FungiDB:PODANS_0_910"/>
<dbReference type="eggNOG" id="ENOG502QS8Y">
    <property type="taxonomic scope" value="Eukaryota"/>
</dbReference>
<dbReference type="HOGENOM" id="CLU_028869_1_1_1"/>
<dbReference type="InParanoid" id="B2ABS0"/>
<dbReference type="OrthoDB" id="3781271at2759"/>
<dbReference type="BRENDA" id="3.1.1.117">
    <property type="organism ID" value="4930"/>
</dbReference>
<dbReference type="SABIO-RK" id="B2ABS0"/>
<dbReference type="Proteomes" id="UP000001197">
    <property type="component" value="Chromosome 2"/>
</dbReference>
<dbReference type="GO" id="GO:0005576">
    <property type="term" value="C:extracellular region"/>
    <property type="evidence" value="ECO:0007669"/>
    <property type="project" value="UniProtKB-SubCell"/>
</dbReference>
<dbReference type="GO" id="GO:0052689">
    <property type="term" value="F:carboxylic ester hydrolase activity"/>
    <property type="evidence" value="ECO:0007669"/>
    <property type="project" value="UniProtKB-KW"/>
</dbReference>
<dbReference type="GO" id="GO:0030248">
    <property type="term" value="F:cellulose binding"/>
    <property type="evidence" value="ECO:0007669"/>
    <property type="project" value="InterPro"/>
</dbReference>
<dbReference type="GO" id="GO:0005975">
    <property type="term" value="P:carbohydrate metabolic process"/>
    <property type="evidence" value="ECO:0007669"/>
    <property type="project" value="InterPro"/>
</dbReference>
<dbReference type="GO" id="GO:0046274">
    <property type="term" value="P:lignin catabolic process"/>
    <property type="evidence" value="ECO:0007669"/>
    <property type="project" value="UniProtKB-KW"/>
</dbReference>
<dbReference type="Gene3D" id="3.40.50.1820">
    <property type="entry name" value="alpha/beta hydrolase"/>
    <property type="match status" value="1"/>
</dbReference>
<dbReference type="InterPro" id="IPR029058">
    <property type="entry name" value="AB_hydrolase_fold"/>
</dbReference>
<dbReference type="InterPro" id="IPR035971">
    <property type="entry name" value="CBD_sf"/>
</dbReference>
<dbReference type="InterPro" id="IPR000254">
    <property type="entry name" value="Cellulose-bd_dom_fun"/>
</dbReference>
<dbReference type="InterPro" id="IPR054579">
    <property type="entry name" value="GCE-like_dom"/>
</dbReference>
<dbReference type="Pfam" id="PF00734">
    <property type="entry name" value="CBM_1"/>
    <property type="match status" value="1"/>
</dbReference>
<dbReference type="Pfam" id="PF22244">
    <property type="entry name" value="GCE_fung"/>
    <property type="match status" value="1"/>
</dbReference>
<dbReference type="SMART" id="SM00236">
    <property type="entry name" value="fCBD"/>
    <property type="match status" value="1"/>
</dbReference>
<dbReference type="SUPFAM" id="SSF53474">
    <property type="entry name" value="alpha/beta-Hydrolases"/>
    <property type="match status" value="1"/>
</dbReference>
<dbReference type="SUPFAM" id="SSF57180">
    <property type="entry name" value="Cellulose-binding domain"/>
    <property type="match status" value="1"/>
</dbReference>
<dbReference type="PROSITE" id="PS00562">
    <property type="entry name" value="CBM1_1"/>
    <property type="match status" value="1"/>
</dbReference>
<dbReference type="PROSITE" id="PS51164">
    <property type="entry name" value="CBM1_2"/>
    <property type="match status" value="1"/>
</dbReference>
<accession>B2ABS0</accession>
<feature type="signal peptide" evidence="2">
    <location>
        <begin position="1"/>
        <end position="21"/>
    </location>
</feature>
<feature type="chain" id="PRO_5002772631" description="4-O-methyl-glucuronoyl methylesterase">
    <location>
        <begin position="22"/>
        <end position="481"/>
    </location>
</feature>
<feature type="domain" description="CBM1" evidence="3">
    <location>
        <begin position="23"/>
        <end position="59"/>
    </location>
</feature>
<feature type="short sequence motif" description="GXSYXG catalytic site motif" evidence="1">
    <location>
        <begin position="291"/>
        <end position="296"/>
    </location>
</feature>
<feature type="active site" description="Nucleophile" evidence="1">
    <location>
        <position position="293"/>
    </location>
</feature>
<feature type="active site" description="Proton donor/acceptor" evidence="1">
    <location>
        <position position="427"/>
    </location>
</feature>
<feature type="binding site" evidence="1">
    <location>
        <position position="297"/>
    </location>
    <ligand>
        <name>substrate</name>
    </ligand>
</feature>
<feature type="binding site" evidence="1">
    <location>
        <position position="339"/>
    </location>
    <ligand>
        <name>substrate</name>
    </ligand>
</feature>
<feature type="binding site" evidence="1">
    <location>
        <position position="347"/>
    </location>
    <ligand>
        <name>substrate</name>
    </ligand>
</feature>
<feature type="binding site" evidence="1">
    <location>
        <position position="391"/>
    </location>
    <ligand>
        <name>substrate</name>
    </ligand>
</feature>
<feature type="disulfide bond" evidence="1">
    <location>
        <begin position="108"/>
        <end position="143"/>
    </location>
</feature>
<feature type="disulfide bond" evidence="1">
    <location>
        <begin position="292"/>
        <end position="428"/>
    </location>
</feature>
<feature type="disulfide bond" evidence="1">
    <location>
        <begin position="324"/>
        <end position="400"/>
    </location>
</feature>
<name>GCE1_PODAN</name>
<organism>
    <name type="scientific">Podospora anserina (strain S / ATCC MYA-4624 / DSM 980 / FGSC 10383)</name>
    <name type="common">Pleurage anserina</name>
    <dbReference type="NCBI Taxonomy" id="515849"/>
    <lineage>
        <taxon>Eukaryota</taxon>
        <taxon>Fungi</taxon>
        <taxon>Dikarya</taxon>
        <taxon>Ascomycota</taxon>
        <taxon>Pezizomycotina</taxon>
        <taxon>Sordariomycetes</taxon>
        <taxon>Sordariomycetidae</taxon>
        <taxon>Sordariales</taxon>
        <taxon>Podosporaceae</taxon>
        <taxon>Podospora</taxon>
        <taxon>Podospora anserina</taxon>
    </lineage>
</organism>
<sequence>MVSQTVVSSLLVVLGAAGVRAQQRQSLWGQCGGSGWSGPTLCVDGAWCNPQNQWYHQCIPGSGPTTAQPQVPTTTARPTTTLVTSVVSSTTSPSGPVVTNPPVNPGTCPNTPSGLGTPVANQLNDPFTFHNGNKVTSKADWACRQREISELLQRYELGTLPPKPSSVTASFSGSTLSISVSEGGKSISFTVSINNRPSGAGPHPAIINFGTFGASLPVPAGVATINFNNDDIAQQQGGSSRGRGKFYDLYGSSHSAGALTAWAWGVSRIVDALELTQAQTGIDPTRLGVTGCSRNGKGAIVAGALEPRIALTLPQESGAGGSGCWRIATWQKNNGQNVQDSTQIVQENVWFSPNFNSYVNNVNQLPFDHHLLAGLIAPRALYVMENVDMEWLGKISTYGCMGIARKQWEALGALDNFGYSQVGGNSHCSFPSSQQGSELNAFIEKFLLKRSGGNTNIFRSTQTHSSFNLNNWSPWAVPSLN</sequence>
<comment type="function">
    <text evidence="4">Glucuronoyl esterase which may play a significant role in biomass degradation, as it is considered to disconnect hemicellulose from lignin through the hydrolysis of the ester bond between 4-O-methyl-D-glucuronic acid residues of glucuronoxylans and aromatic alcohols of lignin.</text>
</comment>
<comment type="catalytic activity">
    <reaction evidence="4">
        <text>a 4-O-methyl-alpha-D-glucuronosyl ester derivative + H2O = 4-O-methyl-alpha-D-glucuronate derivative + an alcohol + H(+)</text>
        <dbReference type="Rhea" id="RHEA:67452"/>
        <dbReference type="ChEBI" id="CHEBI:15377"/>
        <dbReference type="ChEBI" id="CHEBI:15378"/>
        <dbReference type="ChEBI" id="CHEBI:30879"/>
        <dbReference type="ChEBI" id="CHEBI:171667"/>
        <dbReference type="ChEBI" id="CHEBI:171668"/>
        <dbReference type="EC" id="3.1.1.117"/>
    </reaction>
    <physiologicalReaction direction="left-to-right" evidence="7">
        <dbReference type="Rhea" id="RHEA:67453"/>
    </physiologicalReaction>
</comment>
<comment type="biophysicochemical properties">
    <kinetics>
        <KM evidence="4">7.6 mM for 4-nitrophenyl 2-O-(methyl-4-O-methyl-alpha-D-glucopyranosyluronate)-beta-D-xylopyranoside</KM>
        <KM evidence="4">2.66 mM for trans-3-phenyl-2-propen-1-yl D-glucopyranosyluronate</KM>
        <KM evidence="4">0.94 mM for 3-phenyl-1-propyl D-glucopyranosyluronate</KM>
        <KM evidence="4">1.34 mM for 3-(4-hydroxyphenyl)-1-propyl D-glucopyranosyluronate</KM>
        <text evidence="4">kcat is 16.2 min(-1) with 4-nitrophenyl 2-O-(methyl-4-O-methyl-alpha-D-glucopyranosyluronate)-beta-D-xylopyranoside, 315.3 min(-1) with trans-3-phenyl-2-propen-1-yl D-glucopyranosyluronate, 46.5 min(-1) with 3-phenyl-1-propyl D-glucopyranosyluronate and 11.4 min(-1) with 3-(4-hydroxyphenyl)-1-propyl D-glucopyranosyluronate as substrate.</text>
    </kinetics>
</comment>
<comment type="subcellular location">
    <subcellularLocation>
        <location evidence="6">Secreted</location>
    </subcellularLocation>
</comment>
<comment type="similarity">
    <text evidence="6">Belongs to the carbohydrate esterase 15 (CE15) family.</text>
</comment>
<gene>
    <name evidence="5" type="primary">ge1</name>
    <name type="ordered locus">Pa_0_910</name>
    <name type="ORF">PODANS_0_910</name>
</gene>
<proteinExistence type="evidence at protein level"/>
<keyword id="KW-1015">Disulfide bond</keyword>
<keyword id="KW-0378">Hydrolase</keyword>
<keyword id="KW-0439">Lignin degradation</keyword>
<keyword id="KW-1185">Reference proteome</keyword>
<keyword id="KW-0964">Secreted</keyword>
<keyword id="KW-0719">Serine esterase</keyword>
<keyword id="KW-0732">Signal</keyword>
<protein>
    <recommendedName>
        <fullName evidence="6">4-O-methyl-glucuronoyl methylesterase</fullName>
        <ecNumber evidence="4">3.1.1.117</ecNumber>
    </recommendedName>
    <alternativeName>
        <fullName evidence="5">Glucuronoyl esterase 1</fullName>
        <shortName evidence="5">GE1</shortName>
    </alternativeName>
</protein>
<reference key="1">
    <citation type="journal article" date="2008" name="Genome Biol.">
        <title>The genome sequence of the model ascomycete fungus Podospora anserina.</title>
        <authorList>
            <person name="Espagne E."/>
            <person name="Lespinet O."/>
            <person name="Malagnac F."/>
            <person name="Da Silva C."/>
            <person name="Jaillon O."/>
            <person name="Porcel B.M."/>
            <person name="Couloux A."/>
            <person name="Aury J.-M."/>
            <person name="Segurens B."/>
            <person name="Poulain J."/>
            <person name="Anthouard V."/>
            <person name="Grossetete S."/>
            <person name="Khalili H."/>
            <person name="Coppin E."/>
            <person name="Dequard-Chablat M."/>
            <person name="Picard M."/>
            <person name="Contamine V."/>
            <person name="Arnaise S."/>
            <person name="Bourdais A."/>
            <person name="Berteaux-Lecellier V."/>
            <person name="Gautheret D."/>
            <person name="de Vries R.P."/>
            <person name="Battaglia E."/>
            <person name="Coutinho P.M."/>
            <person name="Danchin E.G.J."/>
            <person name="Henrissat B."/>
            <person name="El Khoury R."/>
            <person name="Sainsard-Chanet A."/>
            <person name="Boivin A."/>
            <person name="Pinan-Lucarre B."/>
            <person name="Sellem C.H."/>
            <person name="Debuchy R."/>
            <person name="Wincker P."/>
            <person name="Weissenbach J."/>
            <person name="Silar P."/>
        </authorList>
    </citation>
    <scope>NUCLEOTIDE SEQUENCE [LARGE SCALE GENOMIC DNA]</scope>
    <source>
        <strain>S / ATCC MYA-4624 / DSM 980 / FGSC 10383</strain>
    </source>
</reference>
<reference key="2">
    <citation type="journal article" date="2014" name="Genetics">
        <title>Maintaining two mating types: Structure of the mating type locus and its role in heterokaryosis in Podospora anserina.</title>
        <authorList>
            <person name="Grognet P."/>
            <person name="Bidard F."/>
            <person name="Kuchly C."/>
            <person name="Tong L.C.H."/>
            <person name="Coppin E."/>
            <person name="Benkhali J.A."/>
            <person name="Couloux A."/>
            <person name="Wincker P."/>
            <person name="Debuchy R."/>
            <person name="Silar P."/>
        </authorList>
    </citation>
    <scope>GENOME REANNOTATION</scope>
    <source>
        <strain>S / ATCC MYA-4624 / DSM 980 / FGSC 10383</strain>
    </source>
</reference>
<reference key="3">
    <citation type="journal article" date="2014" name="Appl. Microbiol. Biotechnol.">
        <title>Enzymatic synthesis of model substrates recognized by glucuronoyl esterases from Podospora anserina and Myceliophthora thermophila.</title>
        <authorList>
            <person name="Katsimpouras C."/>
            <person name="Benarouche A."/>
            <person name="Navarro D."/>
            <person name="Karpusas M."/>
            <person name="Dimarogona M."/>
            <person name="Berrin J.G."/>
            <person name="Christakopoulos P."/>
            <person name="Topakas E."/>
        </authorList>
    </citation>
    <scope>FUNCTION</scope>
    <scope>CATALYTIC ACTIVITY</scope>
    <scope>BIOPHYSICOCHEMICAL PROPERTIES</scope>
</reference>